<accession>Q6D482</accession>
<evidence type="ECO:0000255" key="1">
    <source>
        <dbReference type="HAMAP-Rule" id="MF_01590"/>
    </source>
</evidence>
<comment type="function">
    <text evidence="1">Catalyzes carboxymethyl transfer from carboxy-S-adenosyl-L-methionine (Cx-SAM) to 5-hydroxyuridine (ho5U) to form 5-carboxymethoxyuridine (cmo5U) at position 34 in tRNAs.</text>
</comment>
<comment type="catalytic activity">
    <reaction evidence="1">
        <text>carboxy-S-adenosyl-L-methionine + 5-hydroxyuridine(34) in tRNA = 5-carboxymethoxyuridine(34) in tRNA + S-adenosyl-L-homocysteine + H(+)</text>
        <dbReference type="Rhea" id="RHEA:52848"/>
        <dbReference type="Rhea" id="RHEA-COMP:13381"/>
        <dbReference type="Rhea" id="RHEA-COMP:13383"/>
        <dbReference type="ChEBI" id="CHEBI:15378"/>
        <dbReference type="ChEBI" id="CHEBI:57856"/>
        <dbReference type="ChEBI" id="CHEBI:134278"/>
        <dbReference type="ChEBI" id="CHEBI:136877"/>
        <dbReference type="ChEBI" id="CHEBI:136879"/>
    </reaction>
</comment>
<comment type="subunit">
    <text evidence="1">Homotetramer.</text>
</comment>
<comment type="similarity">
    <text evidence="1">Belongs to the class I-like SAM-binding methyltransferase superfamily. CmoB family.</text>
</comment>
<protein>
    <recommendedName>
        <fullName evidence="1">tRNA U34 carboxymethyltransferase</fullName>
        <ecNumber evidence="1">2.5.1.-</ecNumber>
    </recommendedName>
</protein>
<reference key="1">
    <citation type="journal article" date="2004" name="Proc. Natl. Acad. Sci. U.S.A.">
        <title>Genome sequence of the enterobacterial phytopathogen Erwinia carotovora subsp. atroseptica and characterization of virulence factors.</title>
        <authorList>
            <person name="Bell K.S."/>
            <person name="Sebaihia M."/>
            <person name="Pritchard L."/>
            <person name="Holden M.T.G."/>
            <person name="Hyman L.J."/>
            <person name="Holeva M.C."/>
            <person name="Thomson N.R."/>
            <person name="Bentley S.D."/>
            <person name="Churcher L.J.C."/>
            <person name="Mungall K."/>
            <person name="Atkin R."/>
            <person name="Bason N."/>
            <person name="Brooks K."/>
            <person name="Chillingworth T."/>
            <person name="Clark K."/>
            <person name="Doggett J."/>
            <person name="Fraser A."/>
            <person name="Hance Z."/>
            <person name="Hauser H."/>
            <person name="Jagels K."/>
            <person name="Moule S."/>
            <person name="Norbertczak H."/>
            <person name="Ormond D."/>
            <person name="Price C."/>
            <person name="Quail M.A."/>
            <person name="Sanders M."/>
            <person name="Walker D."/>
            <person name="Whitehead S."/>
            <person name="Salmond G.P.C."/>
            <person name="Birch P.R.J."/>
            <person name="Parkhill J."/>
            <person name="Toth I.K."/>
        </authorList>
    </citation>
    <scope>NUCLEOTIDE SEQUENCE [LARGE SCALE GENOMIC DNA]</scope>
    <source>
        <strain>SCRI 1043 / ATCC BAA-672</strain>
    </source>
</reference>
<organism>
    <name type="scientific">Pectobacterium atrosepticum (strain SCRI 1043 / ATCC BAA-672)</name>
    <name type="common">Erwinia carotovora subsp. atroseptica</name>
    <dbReference type="NCBI Taxonomy" id="218491"/>
    <lineage>
        <taxon>Bacteria</taxon>
        <taxon>Pseudomonadati</taxon>
        <taxon>Pseudomonadota</taxon>
        <taxon>Gammaproteobacteria</taxon>
        <taxon>Enterobacterales</taxon>
        <taxon>Pectobacteriaceae</taxon>
        <taxon>Pectobacterium</taxon>
    </lineage>
</organism>
<proteinExistence type="inferred from homology"/>
<gene>
    <name evidence="1" type="primary">cmoB</name>
    <name type="ordered locus">ECA2512</name>
</gene>
<feature type="chain" id="PRO_0000313914" description="tRNA U34 carboxymethyltransferase">
    <location>
        <begin position="1"/>
        <end position="327"/>
    </location>
</feature>
<feature type="binding site" evidence="1">
    <location>
        <position position="91"/>
    </location>
    <ligand>
        <name>carboxy-S-adenosyl-L-methionine</name>
        <dbReference type="ChEBI" id="CHEBI:134278"/>
    </ligand>
</feature>
<feature type="binding site" evidence="1">
    <location>
        <position position="105"/>
    </location>
    <ligand>
        <name>carboxy-S-adenosyl-L-methionine</name>
        <dbReference type="ChEBI" id="CHEBI:134278"/>
    </ligand>
</feature>
<feature type="binding site" evidence="1">
    <location>
        <position position="110"/>
    </location>
    <ligand>
        <name>carboxy-S-adenosyl-L-methionine</name>
        <dbReference type="ChEBI" id="CHEBI:134278"/>
    </ligand>
</feature>
<feature type="binding site" evidence="1">
    <location>
        <position position="130"/>
    </location>
    <ligand>
        <name>carboxy-S-adenosyl-L-methionine</name>
        <dbReference type="ChEBI" id="CHEBI:134278"/>
    </ligand>
</feature>
<feature type="binding site" evidence="1">
    <location>
        <begin position="181"/>
        <end position="182"/>
    </location>
    <ligand>
        <name>carboxy-S-adenosyl-L-methionine</name>
        <dbReference type="ChEBI" id="CHEBI:134278"/>
    </ligand>
</feature>
<feature type="binding site" evidence="1">
    <location>
        <position position="196"/>
    </location>
    <ligand>
        <name>carboxy-S-adenosyl-L-methionine</name>
        <dbReference type="ChEBI" id="CHEBI:134278"/>
    </ligand>
</feature>
<feature type="binding site" evidence="1">
    <location>
        <position position="200"/>
    </location>
    <ligand>
        <name>carboxy-S-adenosyl-L-methionine</name>
        <dbReference type="ChEBI" id="CHEBI:134278"/>
    </ligand>
</feature>
<feature type="binding site" evidence="1">
    <location>
        <position position="315"/>
    </location>
    <ligand>
        <name>carboxy-S-adenosyl-L-methionine</name>
        <dbReference type="ChEBI" id="CHEBI:134278"/>
    </ligand>
</feature>
<name>CMOB_PECAS</name>
<sequence length="327" mass="37190">MIDFGNFYQQIAKGPLSHWLNTLPSQLSSWQQESLHGKFKLWFNSLEHLPSLKPTSLDLNDSVTARIEPDISVGQREGIEKLLRNLMPWRKGPFSLYGVDINTEWRSDWKWQRVLPHISPLKNRLILDVGCGSGYHLWRMVGEGATMAVGIDPMQLFLCQFEAVRKLLGDDQRAHVLPLGIEQLPELAAFDTVFSMGVLYHRRSPLDHLWQLKNQLVAGGELVLETLVIEGDENQVLVPGERYAQMRNVYFIPSAVALTTWLEKCGFVDVRIVDICTTTTQEQRRTDWMITESLAEFLDPEDPTKTVEGYPAPVRAVLVARKPGAEL</sequence>
<dbReference type="EC" id="2.5.1.-" evidence="1"/>
<dbReference type="EMBL" id="BX950851">
    <property type="protein sequence ID" value="CAG75411.1"/>
    <property type="molecule type" value="Genomic_DNA"/>
</dbReference>
<dbReference type="RefSeq" id="WP_011094057.1">
    <property type="nucleotide sequence ID" value="NC_004547.2"/>
</dbReference>
<dbReference type="SMR" id="Q6D482"/>
<dbReference type="STRING" id="218491.ECA2512"/>
<dbReference type="GeneID" id="57208789"/>
<dbReference type="KEGG" id="eca:ECA2512"/>
<dbReference type="PATRIC" id="fig|218491.5.peg.2542"/>
<dbReference type="eggNOG" id="COG0500">
    <property type="taxonomic scope" value="Bacteria"/>
</dbReference>
<dbReference type="HOGENOM" id="CLU_052665_0_0_6"/>
<dbReference type="OrthoDB" id="9773188at2"/>
<dbReference type="Proteomes" id="UP000007966">
    <property type="component" value="Chromosome"/>
</dbReference>
<dbReference type="GO" id="GO:0016765">
    <property type="term" value="F:transferase activity, transferring alkyl or aryl (other than methyl) groups"/>
    <property type="evidence" value="ECO:0007669"/>
    <property type="project" value="UniProtKB-UniRule"/>
</dbReference>
<dbReference type="GO" id="GO:0002098">
    <property type="term" value="P:tRNA wobble uridine modification"/>
    <property type="evidence" value="ECO:0007669"/>
    <property type="project" value="InterPro"/>
</dbReference>
<dbReference type="CDD" id="cd02440">
    <property type="entry name" value="AdoMet_MTases"/>
    <property type="match status" value="1"/>
</dbReference>
<dbReference type="Gene3D" id="3.40.50.150">
    <property type="entry name" value="Vaccinia Virus protein VP39"/>
    <property type="match status" value="1"/>
</dbReference>
<dbReference type="HAMAP" id="MF_01590">
    <property type="entry name" value="tRNA_carboxymethyltr_CmoB"/>
    <property type="match status" value="1"/>
</dbReference>
<dbReference type="InterPro" id="IPR010017">
    <property type="entry name" value="CmoB"/>
</dbReference>
<dbReference type="InterPro" id="IPR027555">
    <property type="entry name" value="Mo5U34_MeTrfas-like"/>
</dbReference>
<dbReference type="InterPro" id="IPR029063">
    <property type="entry name" value="SAM-dependent_MTases_sf"/>
</dbReference>
<dbReference type="NCBIfam" id="NF011650">
    <property type="entry name" value="PRK15068.1"/>
    <property type="match status" value="1"/>
</dbReference>
<dbReference type="NCBIfam" id="TIGR00452">
    <property type="entry name" value="tRNA 5-methoxyuridine(34)/uridine 5-oxyacetic acid(34) synthase CmoB"/>
    <property type="match status" value="1"/>
</dbReference>
<dbReference type="Pfam" id="PF08003">
    <property type="entry name" value="Methyltransf_9"/>
    <property type="match status" value="1"/>
</dbReference>
<dbReference type="SUPFAM" id="SSF53335">
    <property type="entry name" value="S-adenosyl-L-methionine-dependent methyltransferases"/>
    <property type="match status" value="1"/>
</dbReference>
<keyword id="KW-1185">Reference proteome</keyword>
<keyword id="KW-0808">Transferase</keyword>
<keyword id="KW-0819">tRNA processing</keyword>